<gene>
    <name type="primary">infB</name>
</gene>
<dbReference type="EMBL" id="AJ005118">
    <property type="protein sequence ID" value="CAB40557.1"/>
    <property type="molecule type" value="Genomic_DNA"/>
</dbReference>
<dbReference type="SMR" id="Q9X764"/>
<dbReference type="GO" id="GO:0005829">
    <property type="term" value="C:cytosol"/>
    <property type="evidence" value="ECO:0007669"/>
    <property type="project" value="TreeGrafter"/>
</dbReference>
<dbReference type="GO" id="GO:0005525">
    <property type="term" value="F:GTP binding"/>
    <property type="evidence" value="ECO:0007669"/>
    <property type="project" value="UniProtKB-KW"/>
</dbReference>
<dbReference type="GO" id="GO:0003924">
    <property type="term" value="F:GTPase activity"/>
    <property type="evidence" value="ECO:0007669"/>
    <property type="project" value="UniProtKB-UniRule"/>
</dbReference>
<dbReference type="GO" id="GO:0003743">
    <property type="term" value="F:translation initiation factor activity"/>
    <property type="evidence" value="ECO:0007669"/>
    <property type="project" value="UniProtKB-UniRule"/>
</dbReference>
<dbReference type="CDD" id="cd01887">
    <property type="entry name" value="IF2_eIF5B"/>
    <property type="match status" value="1"/>
</dbReference>
<dbReference type="CDD" id="cd03702">
    <property type="entry name" value="IF2_mtIF2_II"/>
    <property type="match status" value="1"/>
</dbReference>
<dbReference type="CDD" id="cd03692">
    <property type="entry name" value="mtIF2_IVc"/>
    <property type="match status" value="1"/>
</dbReference>
<dbReference type="FunFam" id="2.40.30.10:FF:000007">
    <property type="entry name" value="Translation initiation factor IF-2"/>
    <property type="match status" value="1"/>
</dbReference>
<dbReference type="FunFam" id="2.40.30.10:FF:000008">
    <property type="entry name" value="Translation initiation factor IF-2"/>
    <property type="match status" value="1"/>
</dbReference>
<dbReference type="FunFam" id="3.40.50.10050:FF:000001">
    <property type="entry name" value="Translation initiation factor IF-2"/>
    <property type="match status" value="1"/>
</dbReference>
<dbReference type="FunFam" id="3.40.50.300:FF:000019">
    <property type="entry name" value="Translation initiation factor IF-2"/>
    <property type="match status" value="1"/>
</dbReference>
<dbReference type="Gene3D" id="1.10.10.2480">
    <property type="match status" value="1"/>
</dbReference>
<dbReference type="Gene3D" id="3.40.50.300">
    <property type="entry name" value="P-loop containing nucleotide triphosphate hydrolases"/>
    <property type="match status" value="1"/>
</dbReference>
<dbReference type="Gene3D" id="2.40.30.10">
    <property type="entry name" value="Translation factors"/>
    <property type="match status" value="2"/>
</dbReference>
<dbReference type="Gene3D" id="3.40.50.10050">
    <property type="entry name" value="Translation initiation factor IF- 2, domain 3"/>
    <property type="match status" value="1"/>
</dbReference>
<dbReference type="HAMAP" id="MF_00100_B">
    <property type="entry name" value="IF_2_B"/>
    <property type="match status" value="1"/>
</dbReference>
<dbReference type="InterPro" id="IPR053905">
    <property type="entry name" value="EF-G-like_DII"/>
</dbReference>
<dbReference type="InterPro" id="IPR044145">
    <property type="entry name" value="IF2_II"/>
</dbReference>
<dbReference type="InterPro" id="IPR006847">
    <property type="entry name" value="IF2_N"/>
</dbReference>
<dbReference type="InterPro" id="IPR027417">
    <property type="entry name" value="P-loop_NTPase"/>
</dbReference>
<dbReference type="InterPro" id="IPR005225">
    <property type="entry name" value="Small_GTP-bd"/>
</dbReference>
<dbReference type="InterPro" id="IPR000795">
    <property type="entry name" value="T_Tr_GTP-bd_dom"/>
</dbReference>
<dbReference type="InterPro" id="IPR000178">
    <property type="entry name" value="TF_IF2_bacterial-like"/>
</dbReference>
<dbReference type="InterPro" id="IPR015760">
    <property type="entry name" value="TIF_IF2"/>
</dbReference>
<dbReference type="InterPro" id="IPR023115">
    <property type="entry name" value="TIF_IF2_dom3"/>
</dbReference>
<dbReference type="InterPro" id="IPR036925">
    <property type="entry name" value="TIF_IF2_dom3_sf"/>
</dbReference>
<dbReference type="InterPro" id="IPR009000">
    <property type="entry name" value="Transl_B-barrel_sf"/>
</dbReference>
<dbReference type="NCBIfam" id="TIGR00487">
    <property type="entry name" value="IF-2"/>
    <property type="match status" value="1"/>
</dbReference>
<dbReference type="NCBIfam" id="TIGR00231">
    <property type="entry name" value="small_GTP"/>
    <property type="match status" value="1"/>
</dbReference>
<dbReference type="PANTHER" id="PTHR43381:SF5">
    <property type="entry name" value="TR-TYPE G DOMAIN-CONTAINING PROTEIN"/>
    <property type="match status" value="1"/>
</dbReference>
<dbReference type="PANTHER" id="PTHR43381">
    <property type="entry name" value="TRANSLATION INITIATION FACTOR IF-2-RELATED"/>
    <property type="match status" value="1"/>
</dbReference>
<dbReference type="Pfam" id="PF22042">
    <property type="entry name" value="EF-G_D2"/>
    <property type="match status" value="1"/>
</dbReference>
<dbReference type="Pfam" id="PF00009">
    <property type="entry name" value="GTP_EFTU"/>
    <property type="match status" value="1"/>
</dbReference>
<dbReference type="Pfam" id="PF11987">
    <property type="entry name" value="IF-2"/>
    <property type="match status" value="1"/>
</dbReference>
<dbReference type="Pfam" id="PF04760">
    <property type="entry name" value="IF2_N"/>
    <property type="match status" value="2"/>
</dbReference>
<dbReference type="PRINTS" id="PR00449">
    <property type="entry name" value="RASTRNSFRMNG"/>
</dbReference>
<dbReference type="SUPFAM" id="SSF52156">
    <property type="entry name" value="Initiation factor IF2/eIF5b, domain 3"/>
    <property type="match status" value="1"/>
</dbReference>
<dbReference type="SUPFAM" id="SSF52540">
    <property type="entry name" value="P-loop containing nucleoside triphosphate hydrolases"/>
    <property type="match status" value="1"/>
</dbReference>
<dbReference type="SUPFAM" id="SSF50447">
    <property type="entry name" value="Translation proteins"/>
    <property type="match status" value="2"/>
</dbReference>
<dbReference type="PROSITE" id="PS51722">
    <property type="entry name" value="G_TR_2"/>
    <property type="match status" value="1"/>
</dbReference>
<dbReference type="PROSITE" id="PS01176">
    <property type="entry name" value="IF2"/>
    <property type="match status" value="1"/>
</dbReference>
<comment type="function">
    <text evidence="1">One of the essential components for the initiation of protein synthesis. Protects formylmethionyl-tRNA from spontaneous hydrolysis and promotes its binding to the 30S ribosomal subunits. Also involved in the hydrolysis of GTP during the formation of the 70S ribosomal complex (By similarity).</text>
</comment>
<comment type="subcellular location">
    <subcellularLocation>
        <location evidence="1">Cytoplasm</location>
    </subcellularLocation>
</comment>
<comment type="similarity">
    <text evidence="3">Belongs to the TRAFAC class translation factor GTPase superfamily. Classic translation factor GTPase family. IF-2 subfamily.</text>
</comment>
<keyword id="KW-0963">Cytoplasm</keyword>
<keyword id="KW-0342">GTP-binding</keyword>
<keyword id="KW-0396">Initiation factor</keyword>
<keyword id="KW-0547">Nucleotide-binding</keyword>
<keyword id="KW-0648">Protein biosynthesis</keyword>
<organism>
    <name type="scientific">Lactococcus lactis subsp. cremoris</name>
    <name type="common">Streptococcus cremoris</name>
    <dbReference type="NCBI Taxonomy" id="1359"/>
    <lineage>
        <taxon>Bacteria</taxon>
        <taxon>Bacillati</taxon>
        <taxon>Bacillota</taxon>
        <taxon>Bacilli</taxon>
        <taxon>Lactobacillales</taxon>
        <taxon>Streptococcaceae</taxon>
        <taxon>Lactococcus</taxon>
    </lineage>
</organism>
<feature type="chain" id="PRO_0000137212" description="Translation initiation factor IF-2">
    <location>
        <begin position="1"/>
        <end position="950"/>
    </location>
</feature>
<feature type="domain" description="tr-type G">
    <location>
        <begin position="448"/>
        <end position="619"/>
    </location>
</feature>
<feature type="region of interest" description="Disordered" evidence="2">
    <location>
        <begin position="128"/>
        <end position="352"/>
    </location>
</feature>
<feature type="region of interest" description="G1" evidence="1">
    <location>
        <begin position="457"/>
        <end position="464"/>
    </location>
</feature>
<feature type="region of interest" description="G2" evidence="1">
    <location>
        <begin position="482"/>
        <end position="486"/>
    </location>
</feature>
<feature type="region of interest" description="G3" evidence="1">
    <location>
        <begin position="503"/>
        <end position="506"/>
    </location>
</feature>
<feature type="region of interest" description="G4" evidence="1">
    <location>
        <begin position="557"/>
        <end position="560"/>
    </location>
</feature>
<feature type="region of interest" description="G5" evidence="1">
    <location>
        <begin position="595"/>
        <end position="597"/>
    </location>
</feature>
<feature type="compositionally biased region" description="Basic and acidic residues" evidence="2">
    <location>
        <begin position="128"/>
        <end position="156"/>
    </location>
</feature>
<feature type="compositionally biased region" description="Basic and acidic residues" evidence="2">
    <location>
        <begin position="165"/>
        <end position="186"/>
    </location>
</feature>
<feature type="compositionally biased region" description="Basic and acidic residues" evidence="2">
    <location>
        <begin position="200"/>
        <end position="234"/>
    </location>
</feature>
<feature type="compositionally biased region" description="Basic and acidic residues" evidence="2">
    <location>
        <begin position="291"/>
        <end position="312"/>
    </location>
</feature>
<feature type="compositionally biased region" description="Polar residues" evidence="2">
    <location>
        <begin position="322"/>
        <end position="336"/>
    </location>
</feature>
<feature type="compositionally biased region" description="Polar residues" evidence="2">
    <location>
        <begin position="343"/>
        <end position="352"/>
    </location>
</feature>
<feature type="binding site" evidence="1">
    <location>
        <begin position="457"/>
        <end position="464"/>
    </location>
    <ligand>
        <name>GTP</name>
        <dbReference type="ChEBI" id="CHEBI:37565"/>
    </ligand>
</feature>
<feature type="binding site" evidence="1">
    <location>
        <begin position="503"/>
        <end position="507"/>
    </location>
    <ligand>
        <name>GTP</name>
        <dbReference type="ChEBI" id="CHEBI:37565"/>
    </ligand>
</feature>
<feature type="binding site" evidence="1">
    <location>
        <begin position="557"/>
        <end position="560"/>
    </location>
    <ligand>
        <name>GTP</name>
        <dbReference type="ChEBI" id="CHEBI:37565"/>
    </ligand>
</feature>
<proteinExistence type="inferred from homology"/>
<evidence type="ECO:0000250" key="1"/>
<evidence type="ECO:0000256" key="2">
    <source>
        <dbReference type="SAM" id="MobiDB-lite"/>
    </source>
</evidence>
<evidence type="ECO:0000305" key="3"/>
<protein>
    <recommendedName>
        <fullName>Translation initiation factor IF-2</fullName>
    </recommendedName>
</protein>
<name>IF2_LACLC</name>
<sequence>MSDKKRINQIAKETGLSNTELVATAQSLGFEVKSHSSSVTAEQAEKIIQGVKTGTDTIVNLLKKLLKLKLRLVPETAKSKQEDHPRTFAGKAVVEDPAILARIKEKEEAKKAAKTEAEPIEEVITTEKPKVAEPVKKSEPKAAAKAEETKVEKVEAKANTVTPKAEVKTENVADKKEPVVTEEKKKSLTQKPRIQIKVIKRAEDIKKEQAAARPEKKKFDKNRNDRNNRNDNRRPNQNGNGQGHSQGGNHYDKNRPAGQGQNQGQKRDKFASSGSSSTSDTFTPAASGKNNRRDRDRKKTDSNRDNTKDGNRKGGPLRVNDNRNQVRNARNSNWNQKGGRGRYQNNQSSNVPATQRKFHELPESLEYEVGMNVQDIAKSIKREPAEIIKKLFMMGTMVNQNQSLDEDTIELILMDYGVTPLKKVEEDKSDIERLFVEDGYLNEDKMVERPAVVTIMGHVDHGKTTLLDRFRESRVTEGEAGGITQHIGAYQIKTNGKKITFLDTPGHEAFTSMRARGASVTDITILVVAADDGVMPQTIEAINHSKAAGVPIIVAINKLDKPGANPQRVTQELTEHGVFPVAWDPENGSEFVEISAKFNQNLEDLLDTVLLVAEVQELKADPSVRAIGTVVEARLDQGKGAIATLLVQQGTLHIQDPIVVGNTYGRVRTMTNDLGRRIKEAGPSTPIELTGLSDVPQAGDHFAVFEDEKAARAAGEERAKRAQLIKRQNTRRVNLDNLFDTLKEGQTKSVNIIIKADVQGSAEALAASLQKIEVEGVKVDIVHSAVGAISESDISLAAASNAIIIGFNVRPTGLAREQAAQEEVDIRLHSIIYKVIEEVETAMHGMLDPEFKEEIIGEAIVRETFNVSKVGTIAGFMVIRGKVTRDASVRVIREGVVIHDGAIASLKHFKDDVKEVGNAQEGGLMVEDFNDVEIDDTFEVYKMVEIERKK</sequence>
<accession>Q9X764</accession>
<reference key="1">
    <citation type="submission" date="1998-04" db="EMBL/GenBank/DDBJ databases">
        <title>Sequence of infB from Lactococcus lactis.</title>
        <authorList>
            <person name="Adolf K."/>
            <person name="Fink T."/>
            <person name="Hansen J.J."/>
            <person name="Mortensen K.K."/>
            <person name="Sperling-Petersen H.U."/>
        </authorList>
    </citation>
    <scope>NUCLEOTIDE SEQUENCE [GENOMIC DNA]</scope>
    <source>
        <strain>W34</strain>
    </source>
</reference>